<keyword id="KW-0002">3D-structure</keyword>
<keyword id="KW-0007">Acetylation</keyword>
<keyword id="KW-0903">Direct protein sequencing</keyword>
<keyword id="KW-0597">Phosphoprotein</keyword>
<keyword id="KW-0647">Proteasome</keyword>
<keyword id="KW-1185">Reference proteome</keyword>
<name>RPN3_YEAST</name>
<comment type="function">
    <text>Acts as a regulatory subunit of the 26S proteasome which is involved in the ATP-dependent degradation of ubiquitinated proteins.</text>
</comment>
<comment type="subunit">
    <text evidence="1">The 26S proteasome is composed of a core protease, known as the 20S proteasome, capped at one or both ends by the 19S regulatory complex (RC). The RC is composed of at least 18 different subunits in two subcomplexes, the base and the lid, which form the portions proximal and distal to the 20S proteolytic core, respectively (By similarity).</text>
</comment>
<comment type="interaction">
    <interactant intactId="EBI-15927">
        <id>P40016</id>
    </interactant>
    <interactant intactId="EBI-15935">
        <id>Q12250</id>
        <label>RPN5</label>
    </interactant>
    <organismsDiffer>false</organismsDiffer>
    <experiments>5</experiments>
</comment>
<comment type="interaction">
    <interactant intactId="EBI-15927">
        <id>P40016</id>
    </interactant>
    <interactant intactId="EBI-15940">
        <id>Q06103</id>
        <label>RPN7</label>
    </interactant>
    <organismsDiffer>false</organismsDiffer>
    <experiments>8</experiments>
</comment>
<comment type="interaction">
    <interactant intactId="EBI-15927">
        <id>P40016</id>
    </interactant>
    <interactant intactId="EBI-31337">
        <id>O94742</id>
        <label>SEM1</label>
    </interactant>
    <organismsDiffer>false</organismsDiffer>
    <experiments>2</experiments>
</comment>
<comment type="PTM">
    <text evidence="4">N-acetylated by NAT1.</text>
</comment>
<comment type="miscellaneous">
    <text evidence="5">Present with 16700 molecules/cell in log phase SD medium.</text>
</comment>
<comment type="similarity">
    <text evidence="6">Belongs to the proteasome subunit S3 family.</text>
</comment>
<proteinExistence type="evidence at protein level"/>
<sequence length="523" mass="60393">MASTAVMMDVDSSGVNDLHHSEKKYAEEDQVQELLKVLNEISKTTLTLDPRYIWRSLKDLSSLRNQELLNAETLCFTVNVLYPDSSSFKKNLLKFITSNHKSSVPGSAELRNSYPASFYSVNTEKKTIEVTAEINCFMHLLVQLFLWDSKELEQLVEFNRKVVIPNLLCYYNLRSLNLINAKLWFYIYLSHETLARSSEEINSDNQNIILRSTMMKFLKIASLKHDNETKAMLINLILRDFLNNGEVDSASDFISKLEYPHTDVSSSLEARYFFYLSKINAIQLDYSTANEYIIAAIRKAPHNSKSLGFLQQSNKLHCCIQLLMGDIPELSFFHQSNMQKSLLPYYHLTKAVKLGDLKKFTSTITKYKQLLLKDDTYQLCVRLRSNVIKTGIRIISLTYKKISLRDICLKLNLDSEQTVEYMVSRAIRDGVIEAKINHEDGFIETTELLNIYDSEDPQQVFDERIKFANQLHDEYLVSMRYPEDKKTQQNEKSENGENDDDTLDGDLMDDMSDISDLDDLGFL</sequence>
<feature type="initiator methionine" description="Removed" evidence="4">
    <location>
        <position position="1"/>
    </location>
</feature>
<feature type="chain" id="PRO_0000173827" description="26S proteasome regulatory subunit RPN3">
    <location>
        <begin position="2"/>
        <end position="523"/>
    </location>
</feature>
<feature type="domain" description="PCI" evidence="2">
    <location>
        <begin position="270"/>
        <end position="450"/>
    </location>
</feature>
<feature type="region of interest" description="Disordered" evidence="3">
    <location>
        <begin position="480"/>
        <end position="523"/>
    </location>
</feature>
<feature type="compositionally biased region" description="Basic and acidic residues" evidence="3">
    <location>
        <begin position="480"/>
        <end position="495"/>
    </location>
</feature>
<feature type="compositionally biased region" description="Acidic residues" evidence="3">
    <location>
        <begin position="496"/>
        <end position="523"/>
    </location>
</feature>
<feature type="modified residue" description="N-acetylalanine" evidence="4">
    <location>
        <position position="2"/>
    </location>
</feature>
<feature type="modified residue" description="Phosphoserine" evidence="7">
    <location>
        <position position="454"/>
    </location>
</feature>
<feature type="sequence conflict" description="In Ref. 1; no nucleotide entry and 2; BAA11208." evidence="6" ref="1 2">
    <original>G</original>
    <variation>S</variation>
    <location>
        <position position="355"/>
    </location>
</feature>
<feature type="helix" evidence="8">
    <location>
        <begin position="132"/>
        <end position="149"/>
    </location>
</feature>
<feature type="helix" evidence="8">
    <location>
        <begin position="153"/>
        <end position="161"/>
    </location>
</feature>
<feature type="helix" evidence="8">
    <location>
        <begin position="163"/>
        <end position="172"/>
    </location>
</feature>
<feature type="helix" evidence="8">
    <location>
        <begin position="175"/>
        <end position="195"/>
    </location>
</feature>
<feature type="helix" evidence="8">
    <location>
        <begin position="201"/>
        <end position="224"/>
    </location>
</feature>
<feature type="helix" evidence="8">
    <location>
        <begin position="227"/>
        <end position="243"/>
    </location>
</feature>
<feature type="helix" evidence="8">
    <location>
        <begin position="248"/>
        <end position="255"/>
    </location>
</feature>
<feature type="helix" evidence="8">
    <location>
        <begin position="266"/>
        <end position="282"/>
    </location>
</feature>
<feature type="helix" evidence="8">
    <location>
        <begin position="289"/>
        <end position="298"/>
    </location>
</feature>
<feature type="strand" evidence="8">
    <location>
        <begin position="303"/>
        <end position="305"/>
    </location>
</feature>
<feature type="helix" evidence="8">
    <location>
        <begin position="307"/>
        <end position="323"/>
    </location>
</feature>
<feature type="helix" evidence="8">
    <location>
        <begin position="330"/>
        <end position="333"/>
    </location>
</feature>
<feature type="strand" evidence="8">
    <location>
        <begin position="334"/>
        <end position="336"/>
    </location>
</feature>
<feature type="helix" evidence="8">
    <location>
        <begin position="337"/>
        <end position="340"/>
    </location>
</feature>
<feature type="helix" evidence="8">
    <location>
        <begin position="343"/>
        <end position="354"/>
    </location>
</feature>
<feature type="helix" evidence="8">
    <location>
        <begin position="357"/>
        <end position="372"/>
    </location>
</feature>
<feature type="helix" evidence="8">
    <location>
        <begin position="376"/>
        <end position="380"/>
    </location>
</feature>
<feature type="turn" evidence="8">
    <location>
        <begin position="381"/>
        <end position="383"/>
    </location>
</feature>
<feature type="helix" evidence="8">
    <location>
        <begin position="384"/>
        <end position="397"/>
    </location>
</feature>
<feature type="strand" evidence="8">
    <location>
        <begin position="400"/>
        <end position="403"/>
    </location>
</feature>
<feature type="helix" evidence="8">
    <location>
        <begin position="404"/>
        <end position="410"/>
    </location>
</feature>
<feature type="helix" evidence="8">
    <location>
        <begin position="416"/>
        <end position="428"/>
    </location>
</feature>
<feature type="strand" evidence="8">
    <location>
        <begin position="434"/>
        <end position="437"/>
    </location>
</feature>
<feature type="turn" evidence="8">
    <location>
        <begin position="438"/>
        <end position="441"/>
    </location>
</feature>
<feature type="strand" evidence="8">
    <location>
        <begin position="442"/>
        <end position="445"/>
    </location>
</feature>
<feature type="helix" evidence="8">
    <location>
        <begin position="456"/>
        <end position="477"/>
    </location>
</feature>
<accession>P40016</accession>
<accession>D3DLS0</accession>
<protein>
    <recommendedName>
        <fullName>26S proteasome regulatory subunit RPN3</fullName>
    </recommendedName>
</protein>
<gene>
    <name type="primary">RPN3</name>
    <name type="synonym">SUN2</name>
    <name type="ordered locus">YER021W</name>
</gene>
<organism>
    <name type="scientific">Saccharomyces cerevisiae (strain ATCC 204508 / S288c)</name>
    <name type="common">Baker's yeast</name>
    <dbReference type="NCBI Taxonomy" id="559292"/>
    <lineage>
        <taxon>Eukaryota</taxon>
        <taxon>Fungi</taxon>
        <taxon>Dikarya</taxon>
        <taxon>Ascomycota</taxon>
        <taxon>Saccharomycotina</taxon>
        <taxon>Saccharomycetes</taxon>
        <taxon>Saccharomycetales</taxon>
        <taxon>Saccharomycetaceae</taxon>
        <taxon>Saccharomyces</taxon>
    </lineage>
</organism>
<evidence type="ECO:0000250" key="1"/>
<evidence type="ECO:0000255" key="2">
    <source>
        <dbReference type="PROSITE-ProRule" id="PRU01185"/>
    </source>
</evidence>
<evidence type="ECO:0000256" key="3">
    <source>
        <dbReference type="SAM" id="MobiDB-lite"/>
    </source>
</evidence>
<evidence type="ECO:0000269" key="4">
    <source>
    </source>
</evidence>
<evidence type="ECO:0000269" key="5">
    <source>
    </source>
</evidence>
<evidence type="ECO:0000305" key="6"/>
<evidence type="ECO:0007744" key="7">
    <source>
    </source>
</evidence>
<evidence type="ECO:0007829" key="8">
    <source>
        <dbReference type="PDB" id="3JCK"/>
    </source>
</evidence>
<dbReference type="EMBL" id="D78023">
    <property type="protein sequence ID" value="BAA11208.1"/>
    <property type="molecule type" value="Genomic_DNA"/>
</dbReference>
<dbReference type="EMBL" id="U18778">
    <property type="protein sequence ID" value="AAB64554.1"/>
    <property type="molecule type" value="Genomic_DNA"/>
</dbReference>
<dbReference type="EMBL" id="BK006939">
    <property type="protein sequence ID" value="DAA07674.1"/>
    <property type="molecule type" value="Genomic_DNA"/>
</dbReference>
<dbReference type="PIR" id="S50479">
    <property type="entry name" value="S50479"/>
</dbReference>
<dbReference type="RefSeq" id="NP_010938.1">
    <property type="nucleotide sequence ID" value="NM_001178912.1"/>
</dbReference>
<dbReference type="PDB" id="3J47">
    <property type="method" value="EM"/>
    <property type="chains" value="S=455-478"/>
</dbReference>
<dbReference type="PDB" id="3JCK">
    <property type="method" value="EM"/>
    <property type="resolution" value="3.50 A"/>
    <property type="chains" value="A=131-523"/>
</dbReference>
<dbReference type="PDB" id="3JCO">
    <property type="method" value="EM"/>
    <property type="resolution" value="4.80 A"/>
    <property type="chains" value="S=1-523"/>
</dbReference>
<dbReference type="PDB" id="3JCP">
    <property type="method" value="EM"/>
    <property type="resolution" value="4.60 A"/>
    <property type="chains" value="S=1-523"/>
</dbReference>
<dbReference type="PDB" id="4CR2">
    <property type="method" value="EM"/>
    <property type="resolution" value="7.70 A"/>
    <property type="chains" value="S=1-523"/>
</dbReference>
<dbReference type="PDB" id="4CR3">
    <property type="method" value="EM"/>
    <property type="resolution" value="9.30 A"/>
    <property type="chains" value="S=1-523"/>
</dbReference>
<dbReference type="PDB" id="4CR4">
    <property type="method" value="EM"/>
    <property type="resolution" value="8.80 A"/>
    <property type="chains" value="S=1-523"/>
</dbReference>
<dbReference type="PDB" id="5A5B">
    <property type="method" value="EM"/>
    <property type="resolution" value="9.50 A"/>
    <property type="chains" value="S=1-523"/>
</dbReference>
<dbReference type="PDB" id="5MPB">
    <property type="method" value="EM"/>
    <property type="resolution" value="7.80 A"/>
    <property type="chains" value="S=1-523"/>
</dbReference>
<dbReference type="PDB" id="5MPC">
    <property type="method" value="EM"/>
    <property type="resolution" value="7.70 A"/>
    <property type="chains" value="S=1-523"/>
</dbReference>
<dbReference type="PDB" id="5MPD">
    <property type="method" value="EM"/>
    <property type="resolution" value="4.10 A"/>
    <property type="chains" value="S=1-523"/>
</dbReference>
<dbReference type="PDB" id="5MPE">
    <property type="method" value="EM"/>
    <property type="resolution" value="4.50 A"/>
    <property type="chains" value="S=1-523"/>
</dbReference>
<dbReference type="PDB" id="5WVI">
    <property type="method" value="EM"/>
    <property type="resolution" value="6.30 A"/>
    <property type="chains" value="S=1-523"/>
</dbReference>
<dbReference type="PDB" id="5WVK">
    <property type="method" value="EM"/>
    <property type="resolution" value="4.20 A"/>
    <property type="chains" value="S=1-523"/>
</dbReference>
<dbReference type="PDB" id="6FVT">
    <property type="method" value="EM"/>
    <property type="resolution" value="4.10 A"/>
    <property type="chains" value="S=18-492"/>
</dbReference>
<dbReference type="PDB" id="6FVU">
    <property type="method" value="EM"/>
    <property type="resolution" value="4.50 A"/>
    <property type="chains" value="S=18-492"/>
</dbReference>
<dbReference type="PDB" id="6FVV">
    <property type="method" value="EM"/>
    <property type="resolution" value="5.40 A"/>
    <property type="chains" value="S=18-492"/>
</dbReference>
<dbReference type="PDB" id="6FVW">
    <property type="method" value="EM"/>
    <property type="resolution" value="4.50 A"/>
    <property type="chains" value="S=18-492"/>
</dbReference>
<dbReference type="PDB" id="6FVX">
    <property type="method" value="EM"/>
    <property type="resolution" value="4.90 A"/>
    <property type="chains" value="S=18-492"/>
</dbReference>
<dbReference type="PDB" id="6FVY">
    <property type="method" value="EM"/>
    <property type="resolution" value="6.10 A"/>
    <property type="chains" value="S=18-492"/>
</dbReference>
<dbReference type="PDB" id="6J2C">
    <property type="method" value="EM"/>
    <property type="resolution" value="7.00 A"/>
    <property type="chains" value="S=1-523"/>
</dbReference>
<dbReference type="PDB" id="6J2N">
    <property type="method" value="EM"/>
    <property type="resolution" value="7.50 A"/>
    <property type="chains" value="S=1-523"/>
</dbReference>
<dbReference type="PDB" id="6J2Q">
    <property type="method" value="EM"/>
    <property type="resolution" value="3.80 A"/>
    <property type="chains" value="S=1-523"/>
</dbReference>
<dbReference type="PDB" id="6J2X">
    <property type="method" value="EM"/>
    <property type="resolution" value="3.80 A"/>
    <property type="chains" value="S=1-523"/>
</dbReference>
<dbReference type="PDB" id="6J30">
    <property type="method" value="EM"/>
    <property type="resolution" value="4.50 A"/>
    <property type="chains" value="S=1-523"/>
</dbReference>
<dbReference type="PDB" id="7QO3">
    <property type="method" value="EM"/>
    <property type="resolution" value="6.10 A"/>
    <property type="chains" value="S=1-523"/>
</dbReference>
<dbReference type="PDB" id="7QO5">
    <property type="method" value="EM"/>
    <property type="resolution" value="6.00 A"/>
    <property type="chains" value="S=1-523"/>
</dbReference>
<dbReference type="PDBsum" id="3J47"/>
<dbReference type="PDBsum" id="3JCK"/>
<dbReference type="PDBsum" id="3JCO"/>
<dbReference type="PDBsum" id="3JCP"/>
<dbReference type="PDBsum" id="4CR2"/>
<dbReference type="PDBsum" id="4CR3"/>
<dbReference type="PDBsum" id="4CR4"/>
<dbReference type="PDBsum" id="5A5B"/>
<dbReference type="PDBsum" id="5MPB"/>
<dbReference type="PDBsum" id="5MPC"/>
<dbReference type="PDBsum" id="5MPD"/>
<dbReference type="PDBsum" id="5MPE"/>
<dbReference type="PDBsum" id="5WVI"/>
<dbReference type="PDBsum" id="5WVK"/>
<dbReference type="PDBsum" id="6FVT"/>
<dbReference type="PDBsum" id="6FVU"/>
<dbReference type="PDBsum" id="6FVV"/>
<dbReference type="PDBsum" id="6FVW"/>
<dbReference type="PDBsum" id="6FVX"/>
<dbReference type="PDBsum" id="6FVY"/>
<dbReference type="PDBsum" id="6J2C"/>
<dbReference type="PDBsum" id="6J2N"/>
<dbReference type="PDBsum" id="6J2Q"/>
<dbReference type="PDBsum" id="6J2X"/>
<dbReference type="PDBsum" id="6J30"/>
<dbReference type="PDBsum" id="7QO3"/>
<dbReference type="PDBsum" id="7QO5"/>
<dbReference type="EMDB" id="EMD-14082"/>
<dbReference type="EMDB" id="EMD-14084"/>
<dbReference type="EMDB" id="EMD-3136"/>
<dbReference type="EMDB" id="EMD-3536"/>
<dbReference type="EMDB" id="EMD-3537"/>
<dbReference type="EMDB" id="EMD-4321"/>
<dbReference type="EMDB" id="EMD-4322"/>
<dbReference type="EMDB" id="EMD-4323"/>
<dbReference type="EMDB" id="EMD-4324"/>
<dbReference type="EMDB" id="EMD-6693"/>
<dbReference type="EMDB" id="EMD-6694"/>
<dbReference type="EMDB" id="EMD-9769"/>
<dbReference type="EMDB" id="EMD-9770"/>
<dbReference type="EMDB" id="EMD-9771"/>
<dbReference type="EMDB" id="EMD-9772"/>
<dbReference type="EMDB" id="EMD-9773"/>
<dbReference type="SMR" id="P40016"/>
<dbReference type="BioGRID" id="36755">
    <property type="interactions" value="164"/>
</dbReference>
<dbReference type="ComplexPortal" id="CPX-2262">
    <property type="entry name" value="26S proteasome complex"/>
</dbReference>
<dbReference type="DIP" id="DIP-1322N"/>
<dbReference type="FunCoup" id="P40016">
    <property type="interactions" value="1428"/>
</dbReference>
<dbReference type="IntAct" id="P40016">
    <property type="interactions" value="56"/>
</dbReference>
<dbReference type="MINT" id="P40016"/>
<dbReference type="STRING" id="4932.YER021W"/>
<dbReference type="MEROPS" id="X13.001"/>
<dbReference type="iPTMnet" id="P40016"/>
<dbReference type="PaxDb" id="4932-YER021W"/>
<dbReference type="PeptideAtlas" id="P40016"/>
<dbReference type="EnsemblFungi" id="YER021W_mRNA">
    <property type="protein sequence ID" value="YER021W"/>
    <property type="gene ID" value="YER021W"/>
</dbReference>
<dbReference type="GeneID" id="856742"/>
<dbReference type="KEGG" id="sce:YER021W"/>
<dbReference type="AGR" id="SGD:S000000823"/>
<dbReference type="SGD" id="S000000823">
    <property type="gene designation" value="RPN3"/>
</dbReference>
<dbReference type="VEuPathDB" id="FungiDB:YER021W"/>
<dbReference type="eggNOG" id="KOG2581">
    <property type="taxonomic scope" value="Eukaryota"/>
</dbReference>
<dbReference type="GeneTree" id="ENSGT00940000153653"/>
<dbReference type="HOGENOM" id="CLU_019858_1_2_1"/>
<dbReference type="InParanoid" id="P40016"/>
<dbReference type="OMA" id="AKLWFYI"/>
<dbReference type="OrthoDB" id="1713558at2759"/>
<dbReference type="BioCyc" id="YEAST:G3O-30205-MONOMER"/>
<dbReference type="Reactome" id="R-SCE-1236978">
    <property type="pathway name" value="Cross-presentation of soluble exogenous antigens (endosomes)"/>
</dbReference>
<dbReference type="Reactome" id="R-SCE-5668541">
    <property type="pathway name" value="TNFR2 non-canonical NF-kB pathway"/>
</dbReference>
<dbReference type="Reactome" id="R-SCE-5687128">
    <property type="pathway name" value="MAPK6/MAPK4 signaling"/>
</dbReference>
<dbReference type="Reactome" id="R-SCE-5689880">
    <property type="pathway name" value="Ub-specific processing proteases"/>
</dbReference>
<dbReference type="Reactome" id="R-SCE-6798695">
    <property type="pathway name" value="Neutrophil degranulation"/>
</dbReference>
<dbReference type="Reactome" id="R-SCE-68949">
    <property type="pathway name" value="Orc1 removal from chromatin"/>
</dbReference>
<dbReference type="Reactome" id="R-SCE-69017">
    <property type="pathway name" value="CDK-mediated phosphorylation and removal of Cdc6"/>
</dbReference>
<dbReference type="Reactome" id="R-SCE-69601">
    <property type="pathway name" value="Ubiquitin Mediated Degradation of Phosphorylated Cdc25A"/>
</dbReference>
<dbReference type="Reactome" id="R-SCE-8854050">
    <property type="pathway name" value="FBXL7 down-regulates AURKA during mitotic entry and in early mitosis"/>
</dbReference>
<dbReference type="Reactome" id="R-SCE-8948751">
    <property type="pathway name" value="Regulation of PTEN stability and activity"/>
</dbReference>
<dbReference type="Reactome" id="R-SCE-8951664">
    <property type="pathway name" value="Neddylation"/>
</dbReference>
<dbReference type="Reactome" id="R-SCE-9755511">
    <property type="pathway name" value="KEAP1-NFE2L2 pathway"/>
</dbReference>
<dbReference type="Reactome" id="R-SCE-983168">
    <property type="pathway name" value="Antigen processing: Ubiquitination &amp; Proteasome degradation"/>
</dbReference>
<dbReference type="Reactome" id="R-SCE-9907900">
    <property type="pathway name" value="Proteasome assembly"/>
</dbReference>
<dbReference type="BioGRID-ORCS" id="856742">
    <property type="hits" value="8 hits in 10 CRISPR screens"/>
</dbReference>
<dbReference type="CD-CODE" id="E03F929F">
    <property type="entry name" value="Stress granule"/>
</dbReference>
<dbReference type="EvolutionaryTrace" id="P40016"/>
<dbReference type="PRO" id="PR:P40016"/>
<dbReference type="Proteomes" id="UP000002311">
    <property type="component" value="Chromosome V"/>
</dbReference>
<dbReference type="RNAct" id="P40016">
    <property type="molecule type" value="protein"/>
</dbReference>
<dbReference type="GO" id="GO:0000502">
    <property type="term" value="C:proteasome complex"/>
    <property type="evidence" value="ECO:0000353"/>
    <property type="project" value="ComplexPortal"/>
</dbReference>
<dbReference type="GO" id="GO:0008541">
    <property type="term" value="C:proteasome regulatory particle, lid subcomplex"/>
    <property type="evidence" value="ECO:0000314"/>
    <property type="project" value="SGD"/>
</dbReference>
<dbReference type="GO" id="GO:0030234">
    <property type="term" value="F:enzyme regulator activity"/>
    <property type="evidence" value="ECO:0007669"/>
    <property type="project" value="InterPro"/>
</dbReference>
<dbReference type="GO" id="GO:0043161">
    <property type="term" value="P:proteasome-mediated ubiquitin-dependent protein catabolic process"/>
    <property type="evidence" value="ECO:0000314"/>
    <property type="project" value="ComplexPortal"/>
</dbReference>
<dbReference type="GO" id="GO:0042176">
    <property type="term" value="P:regulation of protein catabolic process"/>
    <property type="evidence" value="ECO:0007669"/>
    <property type="project" value="InterPro"/>
</dbReference>
<dbReference type="GO" id="GO:0006511">
    <property type="term" value="P:ubiquitin-dependent protein catabolic process"/>
    <property type="evidence" value="ECO:0000318"/>
    <property type="project" value="GO_Central"/>
</dbReference>
<dbReference type="InterPro" id="IPR013586">
    <property type="entry name" value="26S_Psome_reg_C"/>
</dbReference>
<dbReference type="InterPro" id="IPR050756">
    <property type="entry name" value="CSN3"/>
</dbReference>
<dbReference type="InterPro" id="IPR000717">
    <property type="entry name" value="PCI_dom"/>
</dbReference>
<dbReference type="InterPro" id="IPR036390">
    <property type="entry name" value="WH_DNA-bd_sf"/>
</dbReference>
<dbReference type="PANTHER" id="PTHR10758:SF2">
    <property type="entry name" value="26S PROTEASOME NON-ATPASE REGULATORY SUBUNIT 3"/>
    <property type="match status" value="1"/>
</dbReference>
<dbReference type="PANTHER" id="PTHR10758">
    <property type="entry name" value="26S PROTEASOME NON-ATPASE REGULATORY SUBUNIT 3/COP9 SIGNALOSOME COMPLEX SUBUNIT 3"/>
    <property type="match status" value="1"/>
</dbReference>
<dbReference type="Pfam" id="PF01399">
    <property type="entry name" value="PCI"/>
    <property type="match status" value="1"/>
</dbReference>
<dbReference type="Pfam" id="PF08375">
    <property type="entry name" value="Rpn3_C"/>
    <property type="match status" value="1"/>
</dbReference>
<dbReference type="SMART" id="SM00753">
    <property type="entry name" value="PAM"/>
    <property type="match status" value="1"/>
</dbReference>
<dbReference type="SMART" id="SM00088">
    <property type="entry name" value="PINT"/>
    <property type="match status" value="1"/>
</dbReference>
<dbReference type="SUPFAM" id="SSF46785">
    <property type="entry name" value="Winged helix' DNA-binding domain"/>
    <property type="match status" value="1"/>
</dbReference>
<dbReference type="PROSITE" id="PS50250">
    <property type="entry name" value="PCI"/>
    <property type="match status" value="1"/>
</dbReference>
<reference key="1">
    <citation type="journal article" date="1996" name="Mol. Gen. Genet.">
        <title>A multicopy suppressor of nin1-1 of the yeast Saccharomyces cerevisiae is a counterpart of the Drosophila melanogaster diphenol oxidase A2 gene, Dox-A2.</title>
        <authorList>
            <person name="Kawamura M."/>
            <person name="Kominami K."/>
            <person name="Takeuchi J."/>
            <person name="Toh-e A."/>
        </authorList>
    </citation>
    <scope>NUCLEOTIDE SEQUENCE [GENOMIC DNA]</scope>
</reference>
<reference key="2">
    <citation type="journal article" date="1997" name="Mol. Biol. Cell">
        <title>Yeast counterparts of subunits S5a and p58 (S3) of the human 26S proteasome are encoded by two multicopy suppressors of nin1-1.</title>
        <authorList>
            <person name="Kominami K."/>
            <person name="Okura N."/>
            <person name="Kawamura M."/>
            <person name="Demartino G.N."/>
            <person name="Slaughter C.A."/>
            <person name="Shimbara N."/>
            <person name="Chung C.H."/>
            <person name="Fujimuro M."/>
            <person name="Yokosawa H."/>
            <person name="Shimizu Y."/>
            <person name="Tanahashi N."/>
            <person name="Tanaka K."/>
            <person name="Toh-e A."/>
        </authorList>
    </citation>
    <scope>NUCLEOTIDE SEQUENCE [GENOMIC DNA]</scope>
</reference>
<reference key="3">
    <citation type="journal article" date="1997" name="Nature">
        <title>The nucleotide sequence of Saccharomyces cerevisiae chromosome V.</title>
        <authorList>
            <person name="Dietrich F.S."/>
            <person name="Mulligan J.T."/>
            <person name="Hennessy K.M."/>
            <person name="Yelton M.A."/>
            <person name="Allen E."/>
            <person name="Araujo R."/>
            <person name="Aviles E."/>
            <person name="Berno A."/>
            <person name="Brennan T."/>
            <person name="Carpenter J."/>
            <person name="Chen E."/>
            <person name="Cherry J.M."/>
            <person name="Chung E."/>
            <person name="Duncan M."/>
            <person name="Guzman E."/>
            <person name="Hartzell G."/>
            <person name="Hunicke-Smith S."/>
            <person name="Hyman R.W."/>
            <person name="Kayser A."/>
            <person name="Komp C."/>
            <person name="Lashkari D."/>
            <person name="Lew H."/>
            <person name="Lin D."/>
            <person name="Mosedale D."/>
            <person name="Nakahara K."/>
            <person name="Namath A."/>
            <person name="Norgren R."/>
            <person name="Oefner P."/>
            <person name="Oh C."/>
            <person name="Petel F.X."/>
            <person name="Roberts D."/>
            <person name="Sehl P."/>
            <person name="Schramm S."/>
            <person name="Shogren T."/>
            <person name="Smith V."/>
            <person name="Taylor P."/>
            <person name="Wei Y."/>
            <person name="Botstein D."/>
            <person name="Davis R.W."/>
        </authorList>
    </citation>
    <scope>NUCLEOTIDE SEQUENCE [LARGE SCALE GENOMIC DNA]</scope>
    <source>
        <strain>ATCC 204508 / S288c</strain>
    </source>
</reference>
<reference key="4">
    <citation type="journal article" date="2014" name="G3 (Bethesda)">
        <title>The reference genome sequence of Saccharomyces cerevisiae: Then and now.</title>
        <authorList>
            <person name="Engel S.R."/>
            <person name="Dietrich F.S."/>
            <person name="Fisk D.G."/>
            <person name="Binkley G."/>
            <person name="Balakrishnan R."/>
            <person name="Costanzo M.C."/>
            <person name="Dwight S.S."/>
            <person name="Hitz B.C."/>
            <person name="Karra K."/>
            <person name="Nash R.S."/>
            <person name="Weng S."/>
            <person name="Wong E.D."/>
            <person name="Lloyd P."/>
            <person name="Skrzypek M.S."/>
            <person name="Miyasato S.R."/>
            <person name="Simison M."/>
            <person name="Cherry J.M."/>
        </authorList>
    </citation>
    <scope>GENOME REANNOTATION</scope>
    <source>
        <strain>ATCC 204508 / S288c</strain>
    </source>
</reference>
<reference key="5">
    <citation type="journal article" date="2003" name="Arch. Biochem. Biophys.">
        <title>N-terminal modifications of the 19S regulatory particle subunits of the yeast proteasome.</title>
        <authorList>
            <person name="Kimura Y."/>
            <person name="Saeki Y."/>
            <person name="Yokosawa H."/>
            <person name="Polevoda B."/>
            <person name="Sherman F."/>
            <person name="Hirano H."/>
        </authorList>
    </citation>
    <scope>PROTEIN SEQUENCE OF 2-8</scope>
    <scope>ACETYLATION AT ALA-2</scope>
</reference>
<reference key="6">
    <citation type="journal article" date="2003" name="Nature">
        <title>Global analysis of protein expression in yeast.</title>
        <authorList>
            <person name="Ghaemmaghami S."/>
            <person name="Huh W.-K."/>
            <person name="Bower K."/>
            <person name="Howson R.W."/>
            <person name="Belle A."/>
            <person name="Dephoure N."/>
            <person name="O'Shea E.K."/>
            <person name="Weissman J.S."/>
        </authorList>
    </citation>
    <scope>LEVEL OF PROTEIN EXPRESSION [LARGE SCALE ANALYSIS]</scope>
</reference>
<reference key="7">
    <citation type="journal article" date="2008" name="Mol. Cell. Proteomics">
        <title>A multidimensional chromatography technology for in-depth phosphoproteome analysis.</title>
        <authorList>
            <person name="Albuquerque C.P."/>
            <person name="Smolka M.B."/>
            <person name="Payne S.H."/>
            <person name="Bafna V."/>
            <person name="Eng J."/>
            <person name="Zhou H."/>
        </authorList>
    </citation>
    <scope>PHOSPHORYLATION [LARGE SCALE ANALYSIS] AT SER-454</scope>
    <scope>IDENTIFICATION BY MASS SPECTROMETRY [LARGE SCALE ANALYSIS]</scope>
</reference>
<reference key="8">
    <citation type="journal article" date="2012" name="Proc. Natl. Acad. Sci. U.S.A.">
        <title>Near-atomic resolution structural model of the yeast 26S proteasome.</title>
        <authorList>
            <person name="Beck F."/>
            <person name="Unverdorben P."/>
            <person name="Bohn S."/>
            <person name="Schweitzer A."/>
            <person name="Pfeifer G."/>
            <person name="Sakata E."/>
            <person name="Nickell S."/>
            <person name="Plitzko J.M."/>
            <person name="Villa E."/>
            <person name="Baumeister W."/>
            <person name="Forster F."/>
        </authorList>
    </citation>
    <scope>STRUCTURE BY ELECTRON MICROSCOPY (7.4 ANGSTROMS) OF THE 26S PROTEASOME</scope>
</reference>